<reference key="1">
    <citation type="journal article" date="2003" name="J. Biol. Chem.">
        <title>Identification and characterization of E2F7, a novel mammalian E2F family member capable of blocking cellular proliferation.</title>
        <authorList>
            <person name="de Bruin A."/>
            <person name="Maiti B."/>
            <person name="Jakoi L."/>
            <person name="Timmers C."/>
            <person name="Buerki R."/>
            <person name="Leone G."/>
        </authorList>
    </citation>
    <scope>NUCLEOTIDE SEQUENCE [MRNA] (ISOFORM 1)</scope>
    <scope>FUNCTION</scope>
    <scope>SUBCELLULAR LOCATION</scope>
    <scope>TISSUE SPECIFICITY</scope>
    <source>
        <strain>C57BL/6J</strain>
    </source>
</reference>
<reference key="2">
    <citation type="journal article" date="2005" name="Science">
        <title>The transcriptional landscape of the mammalian genome.</title>
        <authorList>
            <person name="Carninci P."/>
            <person name="Kasukawa T."/>
            <person name="Katayama S."/>
            <person name="Gough J."/>
            <person name="Frith M.C."/>
            <person name="Maeda N."/>
            <person name="Oyama R."/>
            <person name="Ravasi T."/>
            <person name="Lenhard B."/>
            <person name="Wells C."/>
            <person name="Kodzius R."/>
            <person name="Shimokawa K."/>
            <person name="Bajic V.B."/>
            <person name="Brenner S.E."/>
            <person name="Batalov S."/>
            <person name="Forrest A.R."/>
            <person name="Zavolan M."/>
            <person name="Davis M.J."/>
            <person name="Wilming L.G."/>
            <person name="Aidinis V."/>
            <person name="Allen J.E."/>
            <person name="Ambesi-Impiombato A."/>
            <person name="Apweiler R."/>
            <person name="Aturaliya R.N."/>
            <person name="Bailey T.L."/>
            <person name="Bansal M."/>
            <person name="Baxter L."/>
            <person name="Beisel K.W."/>
            <person name="Bersano T."/>
            <person name="Bono H."/>
            <person name="Chalk A.M."/>
            <person name="Chiu K.P."/>
            <person name="Choudhary V."/>
            <person name="Christoffels A."/>
            <person name="Clutterbuck D.R."/>
            <person name="Crowe M.L."/>
            <person name="Dalla E."/>
            <person name="Dalrymple B.P."/>
            <person name="de Bono B."/>
            <person name="Della Gatta G."/>
            <person name="di Bernardo D."/>
            <person name="Down T."/>
            <person name="Engstrom P."/>
            <person name="Fagiolini M."/>
            <person name="Faulkner G."/>
            <person name="Fletcher C.F."/>
            <person name="Fukushima T."/>
            <person name="Furuno M."/>
            <person name="Futaki S."/>
            <person name="Gariboldi M."/>
            <person name="Georgii-Hemming P."/>
            <person name="Gingeras T.R."/>
            <person name="Gojobori T."/>
            <person name="Green R.E."/>
            <person name="Gustincich S."/>
            <person name="Harbers M."/>
            <person name="Hayashi Y."/>
            <person name="Hensch T.K."/>
            <person name="Hirokawa N."/>
            <person name="Hill D."/>
            <person name="Huminiecki L."/>
            <person name="Iacono M."/>
            <person name="Ikeo K."/>
            <person name="Iwama A."/>
            <person name="Ishikawa T."/>
            <person name="Jakt M."/>
            <person name="Kanapin A."/>
            <person name="Katoh M."/>
            <person name="Kawasawa Y."/>
            <person name="Kelso J."/>
            <person name="Kitamura H."/>
            <person name="Kitano H."/>
            <person name="Kollias G."/>
            <person name="Krishnan S.P."/>
            <person name="Kruger A."/>
            <person name="Kummerfeld S.K."/>
            <person name="Kurochkin I.V."/>
            <person name="Lareau L.F."/>
            <person name="Lazarevic D."/>
            <person name="Lipovich L."/>
            <person name="Liu J."/>
            <person name="Liuni S."/>
            <person name="McWilliam S."/>
            <person name="Madan Babu M."/>
            <person name="Madera M."/>
            <person name="Marchionni L."/>
            <person name="Matsuda H."/>
            <person name="Matsuzawa S."/>
            <person name="Miki H."/>
            <person name="Mignone F."/>
            <person name="Miyake S."/>
            <person name="Morris K."/>
            <person name="Mottagui-Tabar S."/>
            <person name="Mulder N."/>
            <person name="Nakano N."/>
            <person name="Nakauchi H."/>
            <person name="Ng P."/>
            <person name="Nilsson R."/>
            <person name="Nishiguchi S."/>
            <person name="Nishikawa S."/>
            <person name="Nori F."/>
            <person name="Ohara O."/>
            <person name="Okazaki Y."/>
            <person name="Orlando V."/>
            <person name="Pang K.C."/>
            <person name="Pavan W.J."/>
            <person name="Pavesi G."/>
            <person name="Pesole G."/>
            <person name="Petrovsky N."/>
            <person name="Piazza S."/>
            <person name="Reed J."/>
            <person name="Reid J.F."/>
            <person name="Ring B.Z."/>
            <person name="Ringwald M."/>
            <person name="Rost B."/>
            <person name="Ruan Y."/>
            <person name="Salzberg S.L."/>
            <person name="Sandelin A."/>
            <person name="Schneider C."/>
            <person name="Schoenbach C."/>
            <person name="Sekiguchi K."/>
            <person name="Semple C.A."/>
            <person name="Seno S."/>
            <person name="Sessa L."/>
            <person name="Sheng Y."/>
            <person name="Shibata Y."/>
            <person name="Shimada H."/>
            <person name="Shimada K."/>
            <person name="Silva D."/>
            <person name="Sinclair B."/>
            <person name="Sperling S."/>
            <person name="Stupka E."/>
            <person name="Sugiura K."/>
            <person name="Sultana R."/>
            <person name="Takenaka Y."/>
            <person name="Taki K."/>
            <person name="Tammoja K."/>
            <person name="Tan S.L."/>
            <person name="Tang S."/>
            <person name="Taylor M.S."/>
            <person name="Tegner J."/>
            <person name="Teichmann S.A."/>
            <person name="Ueda H.R."/>
            <person name="van Nimwegen E."/>
            <person name="Verardo R."/>
            <person name="Wei C.L."/>
            <person name="Yagi K."/>
            <person name="Yamanishi H."/>
            <person name="Zabarovsky E."/>
            <person name="Zhu S."/>
            <person name="Zimmer A."/>
            <person name="Hide W."/>
            <person name="Bult C."/>
            <person name="Grimmond S.M."/>
            <person name="Teasdale R.D."/>
            <person name="Liu E.T."/>
            <person name="Brusic V."/>
            <person name="Quackenbush J."/>
            <person name="Wahlestedt C."/>
            <person name="Mattick J.S."/>
            <person name="Hume D.A."/>
            <person name="Kai C."/>
            <person name="Sasaki D."/>
            <person name="Tomaru Y."/>
            <person name="Fukuda S."/>
            <person name="Kanamori-Katayama M."/>
            <person name="Suzuki M."/>
            <person name="Aoki J."/>
            <person name="Arakawa T."/>
            <person name="Iida J."/>
            <person name="Imamura K."/>
            <person name="Itoh M."/>
            <person name="Kato T."/>
            <person name="Kawaji H."/>
            <person name="Kawagashira N."/>
            <person name="Kawashima T."/>
            <person name="Kojima M."/>
            <person name="Kondo S."/>
            <person name="Konno H."/>
            <person name="Nakano K."/>
            <person name="Ninomiya N."/>
            <person name="Nishio T."/>
            <person name="Okada M."/>
            <person name="Plessy C."/>
            <person name="Shibata K."/>
            <person name="Shiraki T."/>
            <person name="Suzuki S."/>
            <person name="Tagami M."/>
            <person name="Waki K."/>
            <person name="Watahiki A."/>
            <person name="Okamura-Oho Y."/>
            <person name="Suzuki H."/>
            <person name="Kawai J."/>
            <person name="Hayashizaki Y."/>
        </authorList>
    </citation>
    <scope>NUCLEOTIDE SEQUENCE [LARGE SCALE MRNA] (ISOFORMS 1 AND 2)</scope>
    <source>
        <strain>C57BL/6J</strain>
        <tissue>Embryo</tissue>
        <tissue>Forelimb</tissue>
        <tissue>Spleen</tissue>
        <tissue>Thymus</tissue>
    </source>
</reference>
<reference key="3">
    <citation type="submission" date="2005-07" db="EMBL/GenBank/DDBJ databases">
        <authorList>
            <person name="Mural R.J."/>
            <person name="Adams M.D."/>
            <person name="Myers E.W."/>
            <person name="Smith H.O."/>
            <person name="Venter J.C."/>
        </authorList>
    </citation>
    <scope>NUCLEOTIDE SEQUENCE [LARGE SCALE GENOMIC DNA]</scope>
</reference>
<reference key="4">
    <citation type="journal article" date="2004" name="Genome Res.">
        <title>The status, quality, and expansion of the NIH full-length cDNA project: the Mammalian Gene Collection (MGC).</title>
        <authorList>
            <consortium name="The MGC Project Team"/>
        </authorList>
    </citation>
    <scope>NUCLEOTIDE SEQUENCE [LARGE SCALE MRNA] (ISOFORM 1)</scope>
    <source>
        <tissue>Embryo</tissue>
    </source>
</reference>
<reference key="5">
    <citation type="journal article" date="2008" name="Dev. Cell">
        <title>Synergistic function of E2F7 and E2F8 is essential for cell survival and embryonic development.</title>
        <authorList>
            <person name="Li J."/>
            <person name="Ran C."/>
            <person name="Li E."/>
            <person name="Gordon F."/>
            <person name="Comstock G."/>
            <person name="Siddiqui H."/>
            <person name="Cleghorn W."/>
            <person name="Chen H.-Z."/>
            <person name="Kornacker K."/>
            <person name="Liu C.-G."/>
            <person name="Pandit S.K."/>
            <person name="Khanizadeh M."/>
            <person name="Weinstein M."/>
            <person name="Leone G."/>
            <person name="de Bruin A."/>
        </authorList>
    </citation>
    <scope>FUNCTION</scope>
    <scope>DISRUPTION PHENOTYPE</scope>
</reference>
<reference key="6">
    <citation type="journal article" date="2012" name="EMBO J.">
        <title>E2F7 and E2F8 promote angiogenesis through transcriptional activation of VEGFA in cooperation with HIF1.</title>
        <authorList>
            <person name="Weijts B.G."/>
            <person name="Bakker W.J."/>
            <person name="Cornelissen P.W."/>
            <person name="Liang K.H."/>
            <person name="Schaftenaar F.H."/>
            <person name="Westendorp B."/>
            <person name="de Wolf C.A."/>
            <person name="Paciejewska M."/>
            <person name="Scheele C.L."/>
            <person name="Kent L."/>
            <person name="Leone G."/>
            <person name="Schulte-Merker S."/>
            <person name="de Bruin A."/>
        </authorList>
    </citation>
    <scope>FUNCTION</scope>
</reference>
<reference key="7">
    <citation type="journal article" date="2012" name="Dev. Cell">
        <title>Atypical E2F repressors and activators coordinate placental development.</title>
        <authorList>
            <person name="Ouseph M.M."/>
            <person name="Li J."/>
            <person name="Chen H.Z."/>
            <person name="Pecot T."/>
            <person name="Wenzel P."/>
            <person name="Thompson J.C."/>
            <person name="Comstock G."/>
            <person name="Chokshi V."/>
            <person name="Byrne M."/>
            <person name="Forde B."/>
            <person name="Chong J.L."/>
            <person name="Huang K."/>
            <person name="Machiraju R."/>
            <person name="de Bruin A."/>
            <person name="Leone G."/>
        </authorList>
    </citation>
    <scope>FUNCTION</scope>
    <scope>TISSUE SPECIFICITY</scope>
</reference>
<reference key="8">
    <citation type="journal article" date="2012" name="Genes Dev.">
        <title>The atypical E2F family member E2F7 couples the p53 and RB pathways during cellular senescence.</title>
        <authorList>
            <person name="Aksoy O."/>
            <person name="Chicas A."/>
            <person name="Zeng T."/>
            <person name="Zhao Z."/>
            <person name="McCurrach M."/>
            <person name="Wang X."/>
            <person name="Lowe S.W."/>
        </authorList>
    </citation>
    <scope>FUNCTION</scope>
</reference>
<reference key="9">
    <citation type="journal article" date="2012" name="Nat. Cell Biol.">
        <title>E2F8 is essential for polyploidization in mammalian cells.</title>
        <authorList>
            <person name="Pandit S.K."/>
            <person name="Westendorp B."/>
            <person name="Nantasanti S."/>
            <person name="van Liere E."/>
            <person name="Tooten P.C."/>
            <person name="Cornelissen P.W."/>
            <person name="Toussaint M.J."/>
            <person name="Lamers W.H."/>
            <person name="de Bruin A."/>
        </authorList>
    </citation>
    <scope>FUNCTION</scope>
    <scope>INDUCTION</scope>
</reference>
<reference key="10">
    <citation type="journal article" date="2012" name="Nat. Cell Biol.">
        <title>Canonical and atypical E2Fs regulate the mammalian endocycle.</title>
        <authorList>
            <person name="Chen H.Z."/>
            <person name="Ouseph M.M."/>
            <person name="Li J."/>
            <person name="Pecot T."/>
            <person name="Chokshi V."/>
            <person name="Kent L."/>
            <person name="Bae S."/>
            <person name="Byrne M."/>
            <person name="Duran C."/>
            <person name="Comstock G."/>
            <person name="Trikha P."/>
            <person name="Mair M."/>
            <person name="Senapati S."/>
            <person name="Martin C.K."/>
            <person name="Gandhi S."/>
            <person name="Wilson N."/>
            <person name="Liu B."/>
            <person name="Huang Y.W."/>
            <person name="Thompson J.C."/>
            <person name="Raman S."/>
            <person name="Singh S."/>
            <person name="Leone M."/>
            <person name="Machiraju R."/>
            <person name="Huang K."/>
            <person name="Mo X."/>
            <person name="Fernandez S."/>
            <person name="Kalaszczynska I."/>
            <person name="Wolgemuth D.J."/>
            <person name="Sicinski P."/>
            <person name="Huang T."/>
            <person name="Jin V."/>
            <person name="Leone G."/>
        </authorList>
    </citation>
    <scope>FUNCTION</scope>
    <scope>TISSUE SPECIFICITY</scope>
</reference>
<reference key="11">
    <citation type="journal article" date="2012" name="Nucleic Acids Res.">
        <title>E2F7 represses a network of oscillating cell cycle genes to control S-phase progression.</title>
        <authorList>
            <person name="Westendorp B."/>
            <person name="Mokry M."/>
            <person name="Groot Koerkamp M.J."/>
            <person name="Holstege F.C."/>
            <person name="Cuppen E."/>
            <person name="de Bruin A."/>
        </authorList>
    </citation>
    <scope>FUNCTION</scope>
    <scope>DNA-BINDING</scope>
    <scope>DEVELOPMENTAL STAGE</scope>
</reference>
<keyword id="KW-0010">Activator</keyword>
<keyword id="KW-0025">Alternative splicing</keyword>
<keyword id="KW-0131">Cell cycle</keyword>
<keyword id="KW-0227">DNA damage</keyword>
<keyword id="KW-0238">DNA-binding</keyword>
<keyword id="KW-0539">Nucleus</keyword>
<keyword id="KW-0597">Phosphoprotein</keyword>
<keyword id="KW-1185">Reference proteome</keyword>
<keyword id="KW-0678">Repressor</keyword>
<keyword id="KW-0804">Transcription</keyword>
<keyword id="KW-0805">Transcription regulation</keyword>
<evidence type="ECO:0000250" key="1"/>
<evidence type="ECO:0000250" key="2">
    <source>
        <dbReference type="UniProtKB" id="Q96AV8"/>
    </source>
</evidence>
<evidence type="ECO:0000255" key="3"/>
<evidence type="ECO:0000256" key="4">
    <source>
        <dbReference type="SAM" id="MobiDB-lite"/>
    </source>
</evidence>
<evidence type="ECO:0000269" key="5">
    <source>
    </source>
</evidence>
<evidence type="ECO:0000269" key="6">
    <source>
    </source>
</evidence>
<evidence type="ECO:0000269" key="7">
    <source>
    </source>
</evidence>
<evidence type="ECO:0000269" key="8">
    <source>
    </source>
</evidence>
<evidence type="ECO:0000269" key="9">
    <source>
    </source>
</evidence>
<evidence type="ECO:0000269" key="10">
    <source>
    </source>
</evidence>
<evidence type="ECO:0000269" key="11">
    <source>
    </source>
</evidence>
<evidence type="ECO:0000269" key="12">
    <source>
    </source>
</evidence>
<evidence type="ECO:0000303" key="13">
    <source>
    </source>
</evidence>
<evidence type="ECO:0000305" key="14"/>
<organism>
    <name type="scientific">Mus musculus</name>
    <name type="common">Mouse</name>
    <dbReference type="NCBI Taxonomy" id="10090"/>
    <lineage>
        <taxon>Eukaryota</taxon>
        <taxon>Metazoa</taxon>
        <taxon>Chordata</taxon>
        <taxon>Craniata</taxon>
        <taxon>Vertebrata</taxon>
        <taxon>Euteleostomi</taxon>
        <taxon>Mammalia</taxon>
        <taxon>Eutheria</taxon>
        <taxon>Euarchontoglires</taxon>
        <taxon>Glires</taxon>
        <taxon>Rodentia</taxon>
        <taxon>Myomorpha</taxon>
        <taxon>Muroidea</taxon>
        <taxon>Muridae</taxon>
        <taxon>Murinae</taxon>
        <taxon>Mus</taxon>
        <taxon>Mus</taxon>
    </lineage>
</organism>
<name>E2F7_MOUSE</name>
<proteinExistence type="evidence at protein level"/>
<dbReference type="EMBL" id="AY463359">
    <property type="protein sequence ID" value="AAR26542.1"/>
    <property type="molecule type" value="mRNA"/>
</dbReference>
<dbReference type="EMBL" id="AK031078">
    <property type="protein sequence ID" value="BAC27243.1"/>
    <property type="molecule type" value="mRNA"/>
</dbReference>
<dbReference type="EMBL" id="AK045040">
    <property type="protein sequence ID" value="BAC32193.1"/>
    <property type="status" value="ALT_FRAME"/>
    <property type="molecule type" value="mRNA"/>
</dbReference>
<dbReference type="EMBL" id="AK041481">
    <property type="protein sequence ID" value="BAC30958.1"/>
    <property type="molecule type" value="mRNA"/>
</dbReference>
<dbReference type="EMBL" id="AK143686">
    <property type="protein sequence ID" value="BAE25497.1"/>
    <property type="molecule type" value="mRNA"/>
</dbReference>
<dbReference type="EMBL" id="CH466539">
    <property type="protein sequence ID" value="EDL21712.1"/>
    <property type="molecule type" value="Genomic_DNA"/>
</dbReference>
<dbReference type="EMBL" id="BC145429">
    <property type="protein sequence ID" value="AAI45430.1"/>
    <property type="molecule type" value="mRNA"/>
</dbReference>
<dbReference type="EMBL" id="BC150772">
    <property type="protein sequence ID" value="AAI50773.1"/>
    <property type="molecule type" value="mRNA"/>
</dbReference>
<dbReference type="CCDS" id="CCDS36055.1">
    <molecule id="Q6S7F2-1"/>
</dbReference>
<dbReference type="RefSeq" id="NP_001345489.1">
    <molecule id="Q6S7F2-1"/>
    <property type="nucleotide sequence ID" value="NM_001358560.2"/>
</dbReference>
<dbReference type="RefSeq" id="NP_848724.2">
    <molecule id="Q6S7F2-1"/>
    <property type="nucleotide sequence ID" value="NM_178609.4"/>
</dbReference>
<dbReference type="RefSeq" id="XP_006513945.1">
    <property type="nucleotide sequence ID" value="XM_006513882.3"/>
</dbReference>
<dbReference type="SMR" id="Q6S7F2"/>
<dbReference type="FunCoup" id="Q6S7F2">
    <property type="interactions" value="2066"/>
</dbReference>
<dbReference type="IntAct" id="Q6S7F2">
    <property type="interactions" value="1"/>
</dbReference>
<dbReference type="MINT" id="Q6S7F2"/>
<dbReference type="STRING" id="10090.ENSMUSP00000073453"/>
<dbReference type="GlyGen" id="Q6S7F2">
    <property type="glycosylation" value="1 site"/>
</dbReference>
<dbReference type="iPTMnet" id="Q6S7F2"/>
<dbReference type="PhosphoSitePlus" id="Q6S7F2"/>
<dbReference type="PaxDb" id="10090-ENSMUSP00000073453"/>
<dbReference type="ProteomicsDB" id="277702">
    <molecule id="Q6S7F2-1"/>
</dbReference>
<dbReference type="ProteomicsDB" id="277703">
    <molecule id="Q6S7F2-2"/>
</dbReference>
<dbReference type="Antibodypedia" id="29706">
    <property type="antibodies" value="165 antibodies from 31 providers"/>
</dbReference>
<dbReference type="DNASU" id="52679"/>
<dbReference type="Ensembl" id="ENSMUST00000073781.12">
    <molecule id="Q6S7F2-1"/>
    <property type="protein sequence ID" value="ENSMUSP00000073453.6"/>
    <property type="gene ID" value="ENSMUSG00000020185.17"/>
</dbReference>
<dbReference type="Ensembl" id="ENSMUST00000173471.8">
    <molecule id="Q6S7F2-1"/>
    <property type="protein sequence ID" value="ENSMUSP00000133494.2"/>
    <property type="gene ID" value="ENSMUSG00000020185.17"/>
</dbReference>
<dbReference type="GeneID" id="52679"/>
<dbReference type="KEGG" id="mmu:52679"/>
<dbReference type="UCSC" id="uc007gzo.1">
    <molecule id="Q6S7F2-2"/>
    <property type="organism name" value="mouse"/>
</dbReference>
<dbReference type="UCSC" id="uc007gzp.1">
    <molecule id="Q6S7F2-1"/>
    <property type="organism name" value="mouse"/>
</dbReference>
<dbReference type="AGR" id="MGI:1289147"/>
<dbReference type="CTD" id="144455"/>
<dbReference type="MGI" id="MGI:1289147">
    <property type="gene designation" value="E2f7"/>
</dbReference>
<dbReference type="VEuPathDB" id="HostDB:ENSMUSG00000020185"/>
<dbReference type="eggNOG" id="KOG2578">
    <property type="taxonomic scope" value="Eukaryota"/>
</dbReference>
<dbReference type="GeneTree" id="ENSGT00940000157713"/>
<dbReference type="HOGENOM" id="CLU_014845_1_0_1"/>
<dbReference type="InParanoid" id="Q6S7F2"/>
<dbReference type="OMA" id="VCRQKME"/>
<dbReference type="OrthoDB" id="5318at2759"/>
<dbReference type="PhylomeDB" id="Q6S7F2"/>
<dbReference type="TreeFam" id="TF105567"/>
<dbReference type="Reactome" id="R-MMU-6804116">
    <property type="pathway name" value="TP53 Regulates Transcription of Genes Involved in G1 Cell Cycle Arrest"/>
</dbReference>
<dbReference type="BioGRID-ORCS" id="52679">
    <property type="hits" value="4 hits in 78 CRISPR screens"/>
</dbReference>
<dbReference type="ChiTaRS" id="E2f7">
    <property type="organism name" value="mouse"/>
</dbReference>
<dbReference type="PRO" id="PR:Q6S7F2"/>
<dbReference type="Proteomes" id="UP000000589">
    <property type="component" value="Chromosome 10"/>
</dbReference>
<dbReference type="RNAct" id="Q6S7F2">
    <property type="molecule type" value="protein"/>
</dbReference>
<dbReference type="Bgee" id="ENSMUSG00000020185">
    <property type="expression patterns" value="Expressed in ear vesicle and 141 other cell types or tissues"/>
</dbReference>
<dbReference type="ExpressionAtlas" id="Q6S7F2">
    <property type="expression patterns" value="baseline and differential"/>
</dbReference>
<dbReference type="GO" id="GO:0016607">
    <property type="term" value="C:nuclear speck"/>
    <property type="evidence" value="ECO:0007669"/>
    <property type="project" value="Ensembl"/>
</dbReference>
<dbReference type="GO" id="GO:0005634">
    <property type="term" value="C:nucleus"/>
    <property type="evidence" value="ECO:0000314"/>
    <property type="project" value="MGI"/>
</dbReference>
<dbReference type="GO" id="GO:0005667">
    <property type="term" value="C:transcription regulator complex"/>
    <property type="evidence" value="ECO:0007669"/>
    <property type="project" value="InterPro"/>
</dbReference>
<dbReference type="GO" id="GO:0003700">
    <property type="term" value="F:DNA-binding transcription factor activity"/>
    <property type="evidence" value="ECO:0000314"/>
    <property type="project" value="UniProtKB"/>
</dbReference>
<dbReference type="GO" id="GO:0001217">
    <property type="term" value="F:DNA-binding transcription repressor activity"/>
    <property type="evidence" value="ECO:0000314"/>
    <property type="project" value="UniProtKB"/>
</dbReference>
<dbReference type="GO" id="GO:0001227">
    <property type="term" value="F:DNA-binding transcription repressor activity, RNA polymerase II-specific"/>
    <property type="evidence" value="ECO:0000314"/>
    <property type="project" value="NTNU_SB"/>
</dbReference>
<dbReference type="GO" id="GO:0042802">
    <property type="term" value="F:identical protein binding"/>
    <property type="evidence" value="ECO:0007669"/>
    <property type="project" value="Ensembl"/>
</dbReference>
<dbReference type="GO" id="GO:0000978">
    <property type="term" value="F:RNA polymerase II cis-regulatory region sequence-specific DNA binding"/>
    <property type="evidence" value="ECO:0000314"/>
    <property type="project" value="UniProtKB"/>
</dbReference>
<dbReference type="GO" id="GO:0000977">
    <property type="term" value="F:RNA polymerase II transcription regulatory region sequence-specific DNA binding"/>
    <property type="evidence" value="ECO:0000314"/>
    <property type="project" value="NTNU_SB"/>
</dbReference>
<dbReference type="GO" id="GO:0060718">
    <property type="term" value="P:chorionic trophoblast cell differentiation"/>
    <property type="evidence" value="ECO:0000315"/>
    <property type="project" value="UniProtKB"/>
</dbReference>
<dbReference type="GO" id="GO:0030330">
    <property type="term" value="P:DNA damage response, signal transduction by p53 class mediator"/>
    <property type="evidence" value="ECO:0000250"/>
    <property type="project" value="UniProtKB"/>
</dbReference>
<dbReference type="GO" id="GO:0070365">
    <property type="term" value="P:hepatocyte differentiation"/>
    <property type="evidence" value="ECO:0000315"/>
    <property type="project" value="UniProtKB"/>
</dbReference>
<dbReference type="GO" id="GO:0008285">
    <property type="term" value="P:negative regulation of cell population proliferation"/>
    <property type="evidence" value="ECO:0000314"/>
    <property type="project" value="MGI"/>
</dbReference>
<dbReference type="GO" id="GO:0032466">
    <property type="term" value="P:negative regulation of cytokinesis"/>
    <property type="evidence" value="ECO:0000315"/>
    <property type="project" value="UniProtKB"/>
</dbReference>
<dbReference type="GO" id="GO:2000134">
    <property type="term" value="P:negative regulation of G1/S transition of mitotic cell cycle"/>
    <property type="evidence" value="ECO:0000314"/>
    <property type="project" value="UniProtKB"/>
</dbReference>
<dbReference type="GO" id="GO:0000122">
    <property type="term" value="P:negative regulation of transcription by RNA polymerase II"/>
    <property type="evidence" value="ECO:0000314"/>
    <property type="project" value="UniProtKB"/>
</dbReference>
<dbReference type="GO" id="GO:0001890">
    <property type="term" value="P:placenta development"/>
    <property type="evidence" value="ECO:0000315"/>
    <property type="project" value="UniProtKB"/>
</dbReference>
<dbReference type="GO" id="GO:0032877">
    <property type="term" value="P:positive regulation of DNA endoreduplication"/>
    <property type="evidence" value="ECO:0000315"/>
    <property type="project" value="UniProtKB"/>
</dbReference>
<dbReference type="GO" id="GO:0045944">
    <property type="term" value="P:positive regulation of transcription by RNA polymerase II"/>
    <property type="evidence" value="ECO:0007669"/>
    <property type="project" value="Ensembl"/>
</dbReference>
<dbReference type="GO" id="GO:0006355">
    <property type="term" value="P:regulation of DNA-templated transcription"/>
    <property type="evidence" value="ECO:0000314"/>
    <property type="project" value="MGI"/>
</dbReference>
<dbReference type="GO" id="GO:0002040">
    <property type="term" value="P:sprouting angiogenesis"/>
    <property type="evidence" value="ECO:0000315"/>
    <property type="project" value="UniProtKB"/>
</dbReference>
<dbReference type="GO" id="GO:0060707">
    <property type="term" value="P:trophoblast giant cell differentiation"/>
    <property type="evidence" value="ECO:0000315"/>
    <property type="project" value="UniProtKB"/>
</dbReference>
<dbReference type="FunFam" id="1.10.10.10:FF:000073">
    <property type="entry name" value="E2F transcription factor 8"/>
    <property type="match status" value="1"/>
</dbReference>
<dbReference type="FunFam" id="1.10.10.10:FF:000100">
    <property type="entry name" value="E2F transcription factor 8"/>
    <property type="match status" value="1"/>
</dbReference>
<dbReference type="Gene3D" id="1.10.10.10">
    <property type="entry name" value="Winged helix-like DNA-binding domain superfamily/Winged helix DNA-binding domain"/>
    <property type="match status" value="2"/>
</dbReference>
<dbReference type="InterPro" id="IPR015633">
    <property type="entry name" value="E2F"/>
</dbReference>
<dbReference type="InterPro" id="IPR003316">
    <property type="entry name" value="E2F_WHTH_DNA-bd_dom"/>
</dbReference>
<dbReference type="InterPro" id="IPR036388">
    <property type="entry name" value="WH-like_DNA-bd_sf"/>
</dbReference>
<dbReference type="InterPro" id="IPR036390">
    <property type="entry name" value="WH_DNA-bd_sf"/>
</dbReference>
<dbReference type="PANTHER" id="PTHR12081">
    <property type="entry name" value="TRANSCRIPTION FACTOR E2F"/>
    <property type="match status" value="1"/>
</dbReference>
<dbReference type="PANTHER" id="PTHR12081:SF25">
    <property type="entry name" value="TRANSCRIPTION FACTOR E2F7"/>
    <property type="match status" value="1"/>
</dbReference>
<dbReference type="Pfam" id="PF02319">
    <property type="entry name" value="E2F_TDP"/>
    <property type="match status" value="2"/>
</dbReference>
<dbReference type="SMART" id="SM01372">
    <property type="entry name" value="E2F_TDP"/>
    <property type="match status" value="2"/>
</dbReference>
<dbReference type="SUPFAM" id="SSF46785">
    <property type="entry name" value="Winged helix' DNA-binding domain"/>
    <property type="match status" value="2"/>
</dbReference>
<comment type="function">
    <text evidence="5 6 7 8 9 10 11 12">Atypical E2F transcription factor that participates in various processes such as angiogenesis, polyploidization of specialized cells and DNA damage response. Mainly acts as a transcription repressor that binds DNA independently of DP proteins and specifically recognizes the E2 recognition site 5'-TTTC[CG]CGC-3'. Directly represses transcription of classical E2F transcription factors such as E2F1. Acts as a regulator of S-phase by recognizing and binding the E2-related site 5'-TTCCCGCC-3' and mediating repression of G1/S-regulated genes. Plays a key role in polyploidization of cells in placenta and liver by regulating the endocycle, probably by repressing genes promoting cytokinesis and antagonizing action of classical E2F proteins (E2F1, E2F2 and/or E2F3). Required for placental development by promoting polyploidization of trophoblast giant cells. Also involved in DNA damage response: up-regulated by p53/TP53 following genotoxic stress and acts as a downstream effector of p53/TP53-dependent repression by mediating repression of indirect p53/TP53 target genes involved in DNA replication. Acts as a promoter of sprouting angiogenesis, possibly by acting as a transcription activator: associates with HIF1A, recognizes and binds the VEGFA promoter, which is different from canonical E2 recognition site, and activates expression of the VEGFA gene. Acts as a negative regulator of keratinocyte differentiation.</text>
</comment>
<comment type="subunit">
    <text evidence="1 2">Interacts with HIF1A (By similarity). Homodimer and heterodimer: mainly forms homodimers and, to a lesser extent, heterodimers with E2F8. Dimerization is important for DNA-binding. Interacts with MN1 (By similarity).</text>
</comment>
<comment type="interaction">
    <interactant intactId="EBI-8030813">
        <id>Q6S7F2</id>
    </interactant>
    <interactant intactId="EBI-447269">
        <id>Q16665</id>
        <label>HIF1A</label>
    </interactant>
    <organismsDiffer>true</organismsDiffer>
    <experiments>3</experiments>
</comment>
<comment type="subcellular location">
    <subcellularLocation>
        <location evidence="5">Nucleus</location>
    </subcellularLocation>
</comment>
<comment type="alternative products">
    <event type="alternative splicing"/>
    <isoform>
        <id>Q6S7F2-1</id>
        <name>1</name>
        <sequence type="displayed"/>
    </isoform>
    <isoform>
        <id>Q6S7F2-2</id>
        <name>2</name>
        <sequence type="described" ref="VSP_044618 VSP_044619"/>
    </isoform>
</comment>
<comment type="tissue specificity">
    <text evidence="5 8 12">Widely expressed with highest levels in skin and thymus and very low levels in brain, muscle and stomach. Expressed in trophoblast giant cells throughout placenta development (at protein level).</text>
</comment>
<comment type="developmental stage">
    <text evidence="7">Highly expressed during mid to late S-phase.</text>
</comment>
<comment type="induction">
    <text evidence="11">Induced at the onset of hepatocyte polyploidization.</text>
</comment>
<comment type="domain">
    <text evidence="5">In contrast to classical members of the E2F transcription factor, atypical members contain 2 DNA-binding domains and regulate transcription in a DP-independent manner. Both DNA-binding domains are required for DNA-binding and are proposed to form an intramolecular structure that is similar to the winged helix structure of the E2F-DP heterodimer (PubMed:12893818).</text>
</comment>
<comment type="disruption phenotype">
    <text evidence="6">No visible phenotype; mice develop normally and live to old age. E2f7 and E2f8 double knockout embryos die by 11.5 dpc of massive apoptosis and dilation of blood vessels and show increased expression of E2f1 and Tp53, as well as many stress-related genes.</text>
</comment>
<comment type="similarity">
    <text evidence="14">Belongs to the E2F/DP family.</text>
</comment>
<comment type="sequence caution" evidence="14">
    <conflict type="frameshift">
        <sequence resource="EMBL-CDS" id="BAC32193"/>
    </conflict>
</comment>
<protein>
    <recommendedName>
        <fullName>Transcription factor E2F7</fullName>
        <shortName>E2F-7</shortName>
    </recommendedName>
</protein>
<feature type="chain" id="PRO_0000298908" description="Transcription factor E2F7">
    <location>
        <begin position="1"/>
        <end position="904"/>
    </location>
</feature>
<feature type="DNA-binding region" evidence="3">
    <location>
        <begin position="143"/>
        <end position="212"/>
    </location>
</feature>
<feature type="DNA-binding region" evidence="3">
    <location>
        <begin position="283"/>
        <end position="368"/>
    </location>
</feature>
<feature type="region of interest" description="Disordered" evidence="4">
    <location>
        <begin position="61"/>
        <end position="80"/>
    </location>
</feature>
<feature type="region of interest" description="Disordered" evidence="4">
    <location>
        <begin position="252"/>
        <end position="283"/>
    </location>
</feature>
<feature type="region of interest" description="Disordered" evidence="4">
    <location>
        <begin position="560"/>
        <end position="628"/>
    </location>
</feature>
<feature type="region of interest" description="Disordered" evidence="4">
    <location>
        <begin position="846"/>
        <end position="904"/>
    </location>
</feature>
<feature type="compositionally biased region" description="Basic and acidic residues" evidence="4">
    <location>
        <begin position="252"/>
        <end position="269"/>
    </location>
</feature>
<feature type="compositionally biased region" description="Polar residues" evidence="4">
    <location>
        <begin position="886"/>
        <end position="904"/>
    </location>
</feature>
<feature type="modified residue" description="Phosphoserine" evidence="2">
    <location>
        <position position="96"/>
    </location>
</feature>
<feature type="modified residue" description="Phosphoserine" evidence="2">
    <location>
        <position position="411"/>
    </location>
</feature>
<feature type="modified residue" description="Phosphoserine" evidence="2">
    <location>
        <position position="833"/>
    </location>
</feature>
<feature type="splice variant" id="VSP_044618" description="In isoform 2." evidence="13">
    <original>DEELLDVSASILPELKKEAYGQIRVCAKERLVRYGSFNTVHTSEKI</original>
    <variation>GKEMRSFDKDLWYIPFPSSTCRQQNWPFPVLPVTRNLRLMTSLLEQ</variation>
    <location>
        <begin position="376"/>
        <end position="421"/>
    </location>
</feature>
<feature type="splice variant" id="VSP_044619" description="In isoform 2." evidence="13">
    <location>
        <begin position="422"/>
        <end position="904"/>
    </location>
</feature>
<feature type="sequence conflict" description="In Ref. 2; BAC27243." evidence="14" ref="2">
    <original>V</original>
    <variation>D</variation>
    <location>
        <position position="73"/>
    </location>
</feature>
<feature type="sequence conflict" description="In Ref. 2; BAC32193." evidence="14" ref="2">
    <original>Y</original>
    <variation>H</variation>
    <location>
        <position position="159"/>
    </location>
</feature>
<feature type="sequence conflict" description="In Ref. 3; AAI50773/AAI45430." evidence="14" ref="3">
    <original>H</original>
    <variation>L</variation>
    <location>
        <position position="266"/>
    </location>
</feature>
<feature type="sequence conflict" description="In Ref. 2; BAC27243." evidence="14" ref="2">
    <original>L</original>
    <variation>H</variation>
    <location>
        <position position="300"/>
    </location>
</feature>
<feature type="sequence conflict" description="In Ref. 2; BAC32193." evidence="14" ref="2">
    <original>N</original>
    <variation>D</variation>
    <location>
        <position position="776"/>
    </location>
</feature>
<gene>
    <name type="primary">E2f7</name>
</gene>
<sequence length="904" mass="99535">MEVNCLTLKDLISPRQTRLDFAIEDAENAQKENIFVDRSRMTPKTPMKNEPIDLSKQRIFTPDRNPITPVKPVDRQPQVEPWTPTANLKMLISAASPDIRDREKKKELFRPIENKEDAFVNSLQLDVAGDGAVDEYEKQRPSRKQKSLGLLCQKFLARYPSYPLSTEKTTISLDEVAVSLGVERRRIYDIVNVLESLHLVSRVAKNQYGWHGRHSLPKTLRTLQRLGEEQKYEEQMACLQQKELDLMGYRFGERRKDGSPDPRDPHLLDFSEADYPSSSANSRKDKSLRIMSQKFVMLFLVSKTKIVTLDVAAKILIEESQDTPDHSKFKTKVRRLYDIANVLTSLALIKKVHVTEERGRKPAFKWIGPVDFSSIDEELLDVSASILPELKKEAYGQIRVCAKERLVRYGSFNTVHTSEKIQRKVSSEPSSPQGERQGSAYSLEIGSLAAIYRQKVEDNSQEEAFVSNTAVPPASILDPALSMDSEYCVKPLAQPVFSVAQTDLPAFSAQNGPSGQVGVPVPSAASDTENLKPALLAGQPLVYVPSTQLFMLYGSVQEGLSPESRSEEDGGGSDVPADLSVTPSAQKRLCEERDPQEEEDEPAMKRQSQEFEDSPLSLVMPKKPSSSTDLACPVTMGNGSSPPLEDACVKGQLPAAEEVTGKAAPNCYVASECGNPARNPDTEKPSNENEITKDPSLMQYLYVQSPAGLNGFNMVLPGTQTPHTVAPSPAQLPSFGVPCMFLQSPGLGPFPVLYSPAIPGPISSAPGTHPNPGPMNFGLSTLASASHLLISPAAMVNPKPSTLPCTDPQLRCQPSLNLNPVMPGSHGVIHPESPCYVRHPVSMVKAEQSPAPATPKSIQRRHRETFFKTPGSLGDPVFRRKERNQSRNTSSAQRRLEISSSGPD</sequence>
<accession>Q6S7F2</accession>
<accession>B2RWZ8</accession>
<accession>Q8BRE2</accession>
<accession>Q8BSQ3</accession>
<accession>Q8C9R3</accession>